<reference key="1">
    <citation type="journal article" date="2011" name="J. Bacteriol.">
        <title>Comparative genomics of 28 Salmonella enterica isolates: evidence for CRISPR-mediated adaptive sublineage evolution.</title>
        <authorList>
            <person name="Fricke W.F."/>
            <person name="Mammel M.K."/>
            <person name="McDermott P.F."/>
            <person name="Tartera C."/>
            <person name="White D.G."/>
            <person name="Leclerc J.E."/>
            <person name="Ravel J."/>
            <person name="Cebula T.A."/>
        </authorList>
    </citation>
    <scope>NUCLEOTIDE SEQUENCE [LARGE SCALE GENOMIC DNA]</scope>
    <source>
        <strain>SL254</strain>
    </source>
</reference>
<gene>
    <name evidence="1" type="primary">rsmA</name>
    <name evidence="1" type="synonym">ksgA</name>
    <name type="ordered locus">SNSL254_A0095</name>
</gene>
<accession>B4T6L6</accession>
<protein>
    <recommendedName>
        <fullName evidence="1">Ribosomal RNA small subunit methyltransferase A</fullName>
        <ecNumber evidence="1">2.1.1.182</ecNumber>
    </recommendedName>
    <alternativeName>
        <fullName evidence="1">16S rRNA (adenine(1518)-N(6)/adenine(1519)-N(6))-dimethyltransferase</fullName>
    </alternativeName>
    <alternativeName>
        <fullName evidence="1">16S rRNA dimethyladenosine transferase</fullName>
    </alternativeName>
    <alternativeName>
        <fullName evidence="1">16S rRNA dimethylase</fullName>
    </alternativeName>
    <alternativeName>
        <fullName evidence="1">S-adenosylmethionine-6-N', N'-adenosyl(rRNA) dimethyltransferase</fullName>
    </alternativeName>
</protein>
<dbReference type="EC" id="2.1.1.182" evidence="1"/>
<dbReference type="EMBL" id="CP001113">
    <property type="protein sequence ID" value="ACF65421.1"/>
    <property type="molecule type" value="Genomic_DNA"/>
</dbReference>
<dbReference type="RefSeq" id="WP_001065395.1">
    <property type="nucleotide sequence ID" value="NC_011080.1"/>
</dbReference>
<dbReference type="SMR" id="B4T6L6"/>
<dbReference type="KEGG" id="see:SNSL254_A0095"/>
<dbReference type="HOGENOM" id="CLU_041220_0_1_6"/>
<dbReference type="Proteomes" id="UP000008824">
    <property type="component" value="Chromosome"/>
</dbReference>
<dbReference type="GO" id="GO:0005829">
    <property type="term" value="C:cytosol"/>
    <property type="evidence" value="ECO:0007669"/>
    <property type="project" value="TreeGrafter"/>
</dbReference>
<dbReference type="GO" id="GO:0052908">
    <property type="term" value="F:16S rRNA (adenine(1518)-N(6)/adenine(1519)-N(6))-dimethyltransferase activity"/>
    <property type="evidence" value="ECO:0007669"/>
    <property type="project" value="UniProtKB-EC"/>
</dbReference>
<dbReference type="GO" id="GO:0003723">
    <property type="term" value="F:RNA binding"/>
    <property type="evidence" value="ECO:0007669"/>
    <property type="project" value="UniProtKB-KW"/>
</dbReference>
<dbReference type="FunFam" id="1.10.8.100:FF:000001">
    <property type="entry name" value="Ribosomal RNA small subunit methyltransferase A"/>
    <property type="match status" value="1"/>
</dbReference>
<dbReference type="FunFam" id="3.40.50.150:FF:000006">
    <property type="entry name" value="Ribosomal RNA small subunit methyltransferase A"/>
    <property type="match status" value="1"/>
</dbReference>
<dbReference type="Gene3D" id="1.10.8.100">
    <property type="entry name" value="Ribosomal RNA adenine dimethylase-like, domain 2"/>
    <property type="match status" value="1"/>
</dbReference>
<dbReference type="Gene3D" id="3.40.50.150">
    <property type="entry name" value="Vaccinia Virus protein VP39"/>
    <property type="match status" value="1"/>
</dbReference>
<dbReference type="HAMAP" id="MF_00607">
    <property type="entry name" value="16SrRNA_methyltr_A"/>
    <property type="match status" value="1"/>
</dbReference>
<dbReference type="InterPro" id="IPR001737">
    <property type="entry name" value="KsgA/Erm"/>
</dbReference>
<dbReference type="InterPro" id="IPR023165">
    <property type="entry name" value="rRNA_Ade_diMease-like_C"/>
</dbReference>
<dbReference type="InterPro" id="IPR020596">
    <property type="entry name" value="rRNA_Ade_Mease_Trfase_CS"/>
</dbReference>
<dbReference type="InterPro" id="IPR020598">
    <property type="entry name" value="rRNA_Ade_methylase_Trfase_N"/>
</dbReference>
<dbReference type="InterPro" id="IPR011530">
    <property type="entry name" value="rRNA_adenine_dimethylase"/>
</dbReference>
<dbReference type="InterPro" id="IPR029063">
    <property type="entry name" value="SAM-dependent_MTases_sf"/>
</dbReference>
<dbReference type="NCBIfam" id="TIGR00755">
    <property type="entry name" value="ksgA"/>
    <property type="match status" value="1"/>
</dbReference>
<dbReference type="PANTHER" id="PTHR11727">
    <property type="entry name" value="DIMETHYLADENOSINE TRANSFERASE"/>
    <property type="match status" value="1"/>
</dbReference>
<dbReference type="PANTHER" id="PTHR11727:SF7">
    <property type="entry name" value="DIMETHYLADENOSINE TRANSFERASE-RELATED"/>
    <property type="match status" value="1"/>
</dbReference>
<dbReference type="Pfam" id="PF00398">
    <property type="entry name" value="RrnaAD"/>
    <property type="match status" value="1"/>
</dbReference>
<dbReference type="SMART" id="SM00650">
    <property type="entry name" value="rADc"/>
    <property type="match status" value="1"/>
</dbReference>
<dbReference type="SUPFAM" id="SSF53335">
    <property type="entry name" value="S-adenosyl-L-methionine-dependent methyltransferases"/>
    <property type="match status" value="1"/>
</dbReference>
<dbReference type="PROSITE" id="PS01131">
    <property type="entry name" value="RRNA_A_DIMETH"/>
    <property type="match status" value="1"/>
</dbReference>
<dbReference type="PROSITE" id="PS51689">
    <property type="entry name" value="SAM_RNA_A_N6_MT"/>
    <property type="match status" value="1"/>
</dbReference>
<keyword id="KW-0963">Cytoplasm</keyword>
<keyword id="KW-0489">Methyltransferase</keyword>
<keyword id="KW-0694">RNA-binding</keyword>
<keyword id="KW-0698">rRNA processing</keyword>
<keyword id="KW-0949">S-adenosyl-L-methionine</keyword>
<keyword id="KW-0808">Transferase</keyword>
<comment type="function">
    <text evidence="1">Specifically dimethylates two adjacent adenosines (A1518 and A1519) in the loop of a conserved hairpin near the 3'-end of 16S rRNA in the 30S particle. May play a critical role in biogenesis of 30S subunits.</text>
</comment>
<comment type="catalytic activity">
    <reaction evidence="1">
        <text>adenosine(1518)/adenosine(1519) in 16S rRNA + 4 S-adenosyl-L-methionine = N(6)-dimethyladenosine(1518)/N(6)-dimethyladenosine(1519) in 16S rRNA + 4 S-adenosyl-L-homocysteine + 4 H(+)</text>
        <dbReference type="Rhea" id="RHEA:19609"/>
        <dbReference type="Rhea" id="RHEA-COMP:10232"/>
        <dbReference type="Rhea" id="RHEA-COMP:10233"/>
        <dbReference type="ChEBI" id="CHEBI:15378"/>
        <dbReference type="ChEBI" id="CHEBI:57856"/>
        <dbReference type="ChEBI" id="CHEBI:59789"/>
        <dbReference type="ChEBI" id="CHEBI:74411"/>
        <dbReference type="ChEBI" id="CHEBI:74493"/>
        <dbReference type="EC" id="2.1.1.182"/>
    </reaction>
</comment>
<comment type="subcellular location">
    <subcellularLocation>
        <location evidence="1">Cytoplasm</location>
    </subcellularLocation>
</comment>
<comment type="similarity">
    <text evidence="1">Belongs to the class I-like SAM-binding methyltransferase superfamily. rRNA adenine N(6)-methyltransferase family. RsmA subfamily.</text>
</comment>
<evidence type="ECO:0000255" key="1">
    <source>
        <dbReference type="HAMAP-Rule" id="MF_00607"/>
    </source>
</evidence>
<sequence length="273" mass="30574">MNNRVHQGHLARKRFGQNFLNDRFVIDSIVSAINPQKGQAMVEIGPGLAALTEPVGERLDKLTVIELDRDLAARLQTHPFLGPKLTIYQQDAMTMNFGELSAQLGQPLRVFGNLPYNISTPLMFHLFSYTDAIADMHFMLQKEVVNRLVAGPNSKAYGRLSVMAQYYCQVIPVLEVPPSAFTPPPKVDSAVVRLVPHATMPYPVKDIRVLSRITTEAFNQRRKTIRNSLDNLFSVETLTEMGIDPAMRAENISVAQYCQMANYLSENAPLKES</sequence>
<organism>
    <name type="scientific">Salmonella newport (strain SL254)</name>
    <dbReference type="NCBI Taxonomy" id="423368"/>
    <lineage>
        <taxon>Bacteria</taxon>
        <taxon>Pseudomonadati</taxon>
        <taxon>Pseudomonadota</taxon>
        <taxon>Gammaproteobacteria</taxon>
        <taxon>Enterobacterales</taxon>
        <taxon>Enterobacteriaceae</taxon>
        <taxon>Salmonella</taxon>
    </lineage>
</organism>
<proteinExistence type="inferred from homology"/>
<name>RSMA_SALNS</name>
<feature type="chain" id="PRO_1000130318" description="Ribosomal RNA small subunit methyltransferase A">
    <location>
        <begin position="1"/>
        <end position="273"/>
    </location>
</feature>
<feature type="binding site" evidence="1">
    <location>
        <position position="18"/>
    </location>
    <ligand>
        <name>S-adenosyl-L-methionine</name>
        <dbReference type="ChEBI" id="CHEBI:59789"/>
    </ligand>
</feature>
<feature type="binding site" evidence="1">
    <location>
        <position position="20"/>
    </location>
    <ligand>
        <name>S-adenosyl-L-methionine</name>
        <dbReference type="ChEBI" id="CHEBI:59789"/>
    </ligand>
</feature>
<feature type="binding site" evidence="1">
    <location>
        <position position="45"/>
    </location>
    <ligand>
        <name>S-adenosyl-L-methionine</name>
        <dbReference type="ChEBI" id="CHEBI:59789"/>
    </ligand>
</feature>
<feature type="binding site" evidence="1">
    <location>
        <position position="66"/>
    </location>
    <ligand>
        <name>S-adenosyl-L-methionine</name>
        <dbReference type="ChEBI" id="CHEBI:59789"/>
    </ligand>
</feature>
<feature type="binding site" evidence="1">
    <location>
        <position position="91"/>
    </location>
    <ligand>
        <name>S-adenosyl-L-methionine</name>
        <dbReference type="ChEBI" id="CHEBI:59789"/>
    </ligand>
</feature>
<feature type="binding site" evidence="1">
    <location>
        <position position="113"/>
    </location>
    <ligand>
        <name>S-adenosyl-L-methionine</name>
        <dbReference type="ChEBI" id="CHEBI:59789"/>
    </ligand>
</feature>